<dbReference type="EMBL" id="CP000383">
    <property type="protein sequence ID" value="ABG60411.1"/>
    <property type="molecule type" value="Genomic_DNA"/>
</dbReference>
<dbReference type="RefSeq" id="WP_011586520.1">
    <property type="nucleotide sequence ID" value="NC_008255.1"/>
</dbReference>
<dbReference type="SMR" id="Q11QA3"/>
<dbReference type="STRING" id="269798.CHU_3171"/>
<dbReference type="KEGG" id="chu:CHU_3171"/>
<dbReference type="eggNOG" id="COG0244">
    <property type="taxonomic scope" value="Bacteria"/>
</dbReference>
<dbReference type="HOGENOM" id="CLU_092227_3_0_10"/>
<dbReference type="OrthoDB" id="1523686at2"/>
<dbReference type="Proteomes" id="UP000001822">
    <property type="component" value="Chromosome"/>
</dbReference>
<dbReference type="GO" id="GO:0015934">
    <property type="term" value="C:large ribosomal subunit"/>
    <property type="evidence" value="ECO:0007669"/>
    <property type="project" value="InterPro"/>
</dbReference>
<dbReference type="GO" id="GO:0070180">
    <property type="term" value="F:large ribosomal subunit rRNA binding"/>
    <property type="evidence" value="ECO:0007669"/>
    <property type="project" value="UniProtKB-UniRule"/>
</dbReference>
<dbReference type="GO" id="GO:0003735">
    <property type="term" value="F:structural constituent of ribosome"/>
    <property type="evidence" value="ECO:0007669"/>
    <property type="project" value="InterPro"/>
</dbReference>
<dbReference type="GO" id="GO:0006412">
    <property type="term" value="P:translation"/>
    <property type="evidence" value="ECO:0007669"/>
    <property type="project" value="UniProtKB-UniRule"/>
</dbReference>
<dbReference type="CDD" id="cd05797">
    <property type="entry name" value="Ribosomal_L10"/>
    <property type="match status" value="1"/>
</dbReference>
<dbReference type="Gene3D" id="3.30.70.1730">
    <property type="match status" value="1"/>
</dbReference>
<dbReference type="HAMAP" id="MF_00362">
    <property type="entry name" value="Ribosomal_uL10"/>
    <property type="match status" value="1"/>
</dbReference>
<dbReference type="InterPro" id="IPR001790">
    <property type="entry name" value="Ribosomal_uL10"/>
</dbReference>
<dbReference type="InterPro" id="IPR043141">
    <property type="entry name" value="Ribosomal_uL10-like_sf"/>
</dbReference>
<dbReference type="InterPro" id="IPR022973">
    <property type="entry name" value="Ribosomal_uL10_bac"/>
</dbReference>
<dbReference type="InterPro" id="IPR047865">
    <property type="entry name" value="Ribosomal_uL10_bac_type"/>
</dbReference>
<dbReference type="InterPro" id="IPR002363">
    <property type="entry name" value="Ribosomal_uL10_CS_bac"/>
</dbReference>
<dbReference type="NCBIfam" id="NF000955">
    <property type="entry name" value="PRK00099.1-1"/>
    <property type="match status" value="1"/>
</dbReference>
<dbReference type="PANTHER" id="PTHR11560">
    <property type="entry name" value="39S RIBOSOMAL PROTEIN L10, MITOCHONDRIAL"/>
    <property type="match status" value="1"/>
</dbReference>
<dbReference type="Pfam" id="PF00466">
    <property type="entry name" value="Ribosomal_L10"/>
    <property type="match status" value="1"/>
</dbReference>
<dbReference type="SUPFAM" id="SSF160369">
    <property type="entry name" value="Ribosomal protein L10-like"/>
    <property type="match status" value="1"/>
</dbReference>
<dbReference type="PROSITE" id="PS01109">
    <property type="entry name" value="RIBOSOMAL_L10"/>
    <property type="match status" value="1"/>
</dbReference>
<proteinExistence type="inferred from homology"/>
<name>RL10_CYTH3</name>
<protein>
    <recommendedName>
        <fullName evidence="1">Large ribosomal subunit protein uL10</fullName>
    </recommendedName>
    <alternativeName>
        <fullName evidence="2">50S ribosomal protein L10</fullName>
    </alternativeName>
</protein>
<comment type="function">
    <text evidence="1">Forms part of the ribosomal stalk, playing a central role in the interaction of the ribosome with GTP-bound translation factors.</text>
</comment>
<comment type="subunit">
    <text evidence="1">Part of the ribosomal stalk of the 50S ribosomal subunit. The N-terminus interacts with L11 and the large rRNA to form the base of the stalk. The C-terminus forms an elongated spine to which L12 dimers bind in a sequential fashion forming a multimeric L10(L12)X complex.</text>
</comment>
<comment type="similarity">
    <text evidence="1">Belongs to the universal ribosomal protein uL10 family.</text>
</comment>
<reference key="1">
    <citation type="journal article" date="2007" name="Appl. Environ. Microbiol.">
        <title>Genome sequence of the cellulolytic gliding bacterium Cytophaga hutchinsonii.</title>
        <authorList>
            <person name="Xie G."/>
            <person name="Bruce D.C."/>
            <person name="Challacombe J.F."/>
            <person name="Chertkov O."/>
            <person name="Detter J.C."/>
            <person name="Gilna P."/>
            <person name="Han C.S."/>
            <person name="Lucas S."/>
            <person name="Misra M."/>
            <person name="Myers G.L."/>
            <person name="Richardson P."/>
            <person name="Tapia R."/>
            <person name="Thayer N."/>
            <person name="Thompson L.S."/>
            <person name="Brettin T.S."/>
            <person name="Henrissat B."/>
            <person name="Wilson D.B."/>
            <person name="McBride M.J."/>
        </authorList>
    </citation>
    <scope>NUCLEOTIDE SEQUENCE [LARGE SCALE GENOMIC DNA]</scope>
    <source>
        <strain>ATCC 33406 / DSM 1761 / JCM 20678 / CIP 103989 / IAM 12607 / NBRC 15051 / NCIMB 9469 / D465</strain>
    </source>
</reference>
<keyword id="KW-1185">Reference proteome</keyword>
<keyword id="KW-0687">Ribonucleoprotein</keyword>
<keyword id="KW-0689">Ribosomal protein</keyword>
<keyword id="KW-0694">RNA-binding</keyword>
<keyword id="KW-0699">rRNA-binding</keyword>
<accession>Q11QA3</accession>
<gene>
    <name evidence="1" type="primary">rplJ</name>
    <name type="ordered locus">CHU_3171</name>
</gene>
<evidence type="ECO:0000255" key="1">
    <source>
        <dbReference type="HAMAP-Rule" id="MF_00362"/>
    </source>
</evidence>
<evidence type="ECO:0000305" key="2"/>
<sequence length="167" mass="17946">MTKEEKAIIIQEVAQKIAGAATFYITDGSGMTVDQVNKFRKLCFSKGVEYKVVKNSLIKKALQQLNIDHTALNGAALKGASGLMFSDTANVPAKLLKQFHKGGVAKPEFKGASVFADFYVGKDKLDALASIKSKEELIGDIIALLQAPAQRVIGGLTNESRVFAEQA</sequence>
<feature type="chain" id="PRO_1000120946" description="Large ribosomal subunit protein uL10">
    <location>
        <begin position="1"/>
        <end position="167"/>
    </location>
</feature>
<organism>
    <name type="scientific">Cytophaga hutchinsonii (strain ATCC 33406 / DSM 1761 / CIP 103989 / NBRC 15051 / NCIMB 9469 / D465)</name>
    <dbReference type="NCBI Taxonomy" id="269798"/>
    <lineage>
        <taxon>Bacteria</taxon>
        <taxon>Pseudomonadati</taxon>
        <taxon>Bacteroidota</taxon>
        <taxon>Cytophagia</taxon>
        <taxon>Cytophagales</taxon>
        <taxon>Cytophagaceae</taxon>
        <taxon>Cytophaga</taxon>
    </lineage>
</organism>